<accession>B0UWQ4</accession>
<sequence length="360" mass="39010">MAGNSIGQLFRVTTFGESHGIALGCIVDGMPPGLALSEDDIQPDLDRRKPGTSKYTTPRREEDKVQILSGVFDGKTTGTSIGMIIKNTDQRSQDYGEIKDRFRPGHADFTYQQKYGLRDYRGGGRSSARETVMRVAAGAIAKKYLREYFGIEVRGYLSQIGEIKIDPQVVADVSKIDWAKVNSNPFFCPDESAVEKFDELIRELKKAGNSIGAKLTIVAEHVPVGLGEPVFDRLDADLAHALMGINAVKAVEIGDGFAVVEQKGTEHRDEMTPEGFCSNHAGGILGGISSGQPIIATIALKPTSSITVVGRSVNLNNEPVDVITKGRHDPCVGIRAVPIAEAMMAIVLLDHLLRFKAQCK</sequence>
<name>AROC_HISS2</name>
<reference key="1">
    <citation type="submission" date="2008-02" db="EMBL/GenBank/DDBJ databases">
        <title>Complete sequence of Haemophilus somnus 2336.</title>
        <authorList>
            <consortium name="US DOE Joint Genome Institute"/>
            <person name="Siddaramappa S."/>
            <person name="Duncan A.J."/>
            <person name="Challacombe J.F."/>
            <person name="Rainey D."/>
            <person name="Gillaspy A.F."/>
            <person name="Carson M."/>
            <person name="Gipson J."/>
            <person name="Gipson M."/>
            <person name="Bruce D."/>
            <person name="Detter J.C."/>
            <person name="Han C.S."/>
            <person name="Land M."/>
            <person name="Tapia R."/>
            <person name="Thompson L.S."/>
            <person name="Orvis J."/>
            <person name="Zaitshik J."/>
            <person name="Barnes G."/>
            <person name="Brettin T.S."/>
            <person name="Dyer D.W."/>
            <person name="Inzana T.J."/>
        </authorList>
    </citation>
    <scope>NUCLEOTIDE SEQUENCE [LARGE SCALE GENOMIC DNA]</scope>
    <source>
        <strain>2336</strain>
    </source>
</reference>
<proteinExistence type="inferred from homology"/>
<dbReference type="EC" id="4.2.3.5" evidence="1"/>
<dbReference type="EMBL" id="CP000947">
    <property type="protein sequence ID" value="ACA31994.1"/>
    <property type="molecule type" value="Genomic_DNA"/>
</dbReference>
<dbReference type="RefSeq" id="WP_011609360.1">
    <property type="nucleotide sequence ID" value="NC_010519.1"/>
</dbReference>
<dbReference type="SMR" id="B0UWQ4"/>
<dbReference type="STRING" id="228400.HSM_0358"/>
<dbReference type="GeneID" id="31486638"/>
<dbReference type="KEGG" id="hsm:HSM_0358"/>
<dbReference type="HOGENOM" id="CLU_034547_0_2_6"/>
<dbReference type="UniPathway" id="UPA00053">
    <property type="reaction ID" value="UER00090"/>
</dbReference>
<dbReference type="GO" id="GO:0005829">
    <property type="term" value="C:cytosol"/>
    <property type="evidence" value="ECO:0007669"/>
    <property type="project" value="TreeGrafter"/>
</dbReference>
<dbReference type="GO" id="GO:0004107">
    <property type="term" value="F:chorismate synthase activity"/>
    <property type="evidence" value="ECO:0007669"/>
    <property type="project" value="UniProtKB-UniRule"/>
</dbReference>
<dbReference type="GO" id="GO:0010181">
    <property type="term" value="F:FMN binding"/>
    <property type="evidence" value="ECO:0007669"/>
    <property type="project" value="TreeGrafter"/>
</dbReference>
<dbReference type="GO" id="GO:0008652">
    <property type="term" value="P:amino acid biosynthetic process"/>
    <property type="evidence" value="ECO:0007669"/>
    <property type="project" value="UniProtKB-KW"/>
</dbReference>
<dbReference type="GO" id="GO:0009073">
    <property type="term" value="P:aromatic amino acid family biosynthetic process"/>
    <property type="evidence" value="ECO:0007669"/>
    <property type="project" value="UniProtKB-KW"/>
</dbReference>
<dbReference type="GO" id="GO:0009423">
    <property type="term" value="P:chorismate biosynthetic process"/>
    <property type="evidence" value="ECO:0007669"/>
    <property type="project" value="UniProtKB-UniRule"/>
</dbReference>
<dbReference type="CDD" id="cd07304">
    <property type="entry name" value="Chorismate_synthase"/>
    <property type="match status" value="1"/>
</dbReference>
<dbReference type="FunFam" id="3.60.150.10:FF:000001">
    <property type="entry name" value="Chorismate synthase"/>
    <property type="match status" value="1"/>
</dbReference>
<dbReference type="Gene3D" id="3.60.150.10">
    <property type="entry name" value="Chorismate synthase AroC"/>
    <property type="match status" value="1"/>
</dbReference>
<dbReference type="HAMAP" id="MF_00300">
    <property type="entry name" value="Chorismate_synth"/>
    <property type="match status" value="1"/>
</dbReference>
<dbReference type="InterPro" id="IPR000453">
    <property type="entry name" value="Chorismate_synth"/>
</dbReference>
<dbReference type="InterPro" id="IPR035904">
    <property type="entry name" value="Chorismate_synth_AroC_sf"/>
</dbReference>
<dbReference type="InterPro" id="IPR020541">
    <property type="entry name" value="Chorismate_synthase_CS"/>
</dbReference>
<dbReference type="NCBIfam" id="TIGR00033">
    <property type="entry name" value="aroC"/>
    <property type="match status" value="1"/>
</dbReference>
<dbReference type="NCBIfam" id="NF003793">
    <property type="entry name" value="PRK05382.1"/>
    <property type="match status" value="1"/>
</dbReference>
<dbReference type="PANTHER" id="PTHR21085">
    <property type="entry name" value="CHORISMATE SYNTHASE"/>
    <property type="match status" value="1"/>
</dbReference>
<dbReference type="PANTHER" id="PTHR21085:SF0">
    <property type="entry name" value="CHORISMATE SYNTHASE"/>
    <property type="match status" value="1"/>
</dbReference>
<dbReference type="Pfam" id="PF01264">
    <property type="entry name" value="Chorismate_synt"/>
    <property type="match status" value="1"/>
</dbReference>
<dbReference type="PIRSF" id="PIRSF001456">
    <property type="entry name" value="Chorismate_synth"/>
    <property type="match status" value="1"/>
</dbReference>
<dbReference type="SUPFAM" id="SSF103263">
    <property type="entry name" value="Chorismate synthase, AroC"/>
    <property type="match status" value="1"/>
</dbReference>
<dbReference type="PROSITE" id="PS00787">
    <property type="entry name" value="CHORISMATE_SYNTHASE_1"/>
    <property type="match status" value="1"/>
</dbReference>
<dbReference type="PROSITE" id="PS00788">
    <property type="entry name" value="CHORISMATE_SYNTHASE_2"/>
    <property type="match status" value="1"/>
</dbReference>
<dbReference type="PROSITE" id="PS00789">
    <property type="entry name" value="CHORISMATE_SYNTHASE_3"/>
    <property type="match status" value="1"/>
</dbReference>
<keyword id="KW-0028">Amino-acid biosynthesis</keyword>
<keyword id="KW-0057">Aromatic amino acid biosynthesis</keyword>
<keyword id="KW-0274">FAD</keyword>
<keyword id="KW-0285">Flavoprotein</keyword>
<keyword id="KW-0288">FMN</keyword>
<keyword id="KW-0456">Lyase</keyword>
<keyword id="KW-0521">NADP</keyword>
<gene>
    <name evidence="1" type="primary">aroC</name>
    <name type="ordered locus">HSM_0358</name>
</gene>
<comment type="function">
    <text evidence="1">Catalyzes the anti-1,4-elimination of the C-3 phosphate and the C-6 proR hydrogen from 5-enolpyruvylshikimate-3-phosphate (EPSP) to yield chorismate, which is the branch point compound that serves as the starting substrate for the three terminal pathways of aromatic amino acid biosynthesis. This reaction introduces a second double bond into the aromatic ring system.</text>
</comment>
<comment type="catalytic activity">
    <reaction evidence="1">
        <text>5-O-(1-carboxyvinyl)-3-phosphoshikimate = chorismate + phosphate</text>
        <dbReference type="Rhea" id="RHEA:21020"/>
        <dbReference type="ChEBI" id="CHEBI:29748"/>
        <dbReference type="ChEBI" id="CHEBI:43474"/>
        <dbReference type="ChEBI" id="CHEBI:57701"/>
        <dbReference type="EC" id="4.2.3.5"/>
    </reaction>
</comment>
<comment type="cofactor">
    <cofactor evidence="1">
        <name>FMNH2</name>
        <dbReference type="ChEBI" id="CHEBI:57618"/>
    </cofactor>
    <text evidence="1">Reduced FMN (FMNH(2)).</text>
</comment>
<comment type="pathway">
    <text evidence="1">Metabolic intermediate biosynthesis; chorismate biosynthesis; chorismate from D-erythrose 4-phosphate and phosphoenolpyruvate: step 7/7.</text>
</comment>
<comment type="subunit">
    <text evidence="1">Homotetramer.</text>
</comment>
<comment type="similarity">
    <text evidence="1">Belongs to the chorismate synthase family.</text>
</comment>
<organism>
    <name type="scientific">Histophilus somni (strain 2336)</name>
    <name type="common">Haemophilus somnus</name>
    <dbReference type="NCBI Taxonomy" id="228400"/>
    <lineage>
        <taxon>Bacteria</taxon>
        <taxon>Pseudomonadati</taxon>
        <taxon>Pseudomonadota</taxon>
        <taxon>Gammaproteobacteria</taxon>
        <taxon>Pasteurellales</taxon>
        <taxon>Pasteurellaceae</taxon>
        <taxon>Histophilus</taxon>
    </lineage>
</organism>
<protein>
    <recommendedName>
        <fullName evidence="1">Chorismate synthase</fullName>
        <shortName evidence="1">CS</shortName>
        <ecNumber evidence="1">4.2.3.5</ecNumber>
    </recommendedName>
    <alternativeName>
        <fullName evidence="1">5-enolpyruvylshikimate-3-phosphate phospholyase</fullName>
    </alternativeName>
</protein>
<feature type="chain" id="PRO_1000078997" description="Chorismate synthase">
    <location>
        <begin position="1"/>
        <end position="360"/>
    </location>
</feature>
<feature type="region of interest" description="Disordered" evidence="2">
    <location>
        <begin position="36"/>
        <end position="60"/>
    </location>
</feature>
<feature type="binding site" evidence="1">
    <location>
        <position position="48"/>
    </location>
    <ligand>
        <name>NADP(+)</name>
        <dbReference type="ChEBI" id="CHEBI:58349"/>
    </ligand>
</feature>
<feature type="binding site" evidence="1">
    <location>
        <begin position="125"/>
        <end position="127"/>
    </location>
    <ligand>
        <name>FMN</name>
        <dbReference type="ChEBI" id="CHEBI:58210"/>
    </ligand>
</feature>
<feature type="binding site" evidence="1">
    <location>
        <begin position="246"/>
        <end position="247"/>
    </location>
    <ligand>
        <name>FMN</name>
        <dbReference type="ChEBI" id="CHEBI:58210"/>
    </ligand>
</feature>
<feature type="binding site" evidence="1">
    <location>
        <position position="286"/>
    </location>
    <ligand>
        <name>FMN</name>
        <dbReference type="ChEBI" id="CHEBI:58210"/>
    </ligand>
</feature>
<feature type="binding site" evidence="1">
    <location>
        <begin position="301"/>
        <end position="305"/>
    </location>
    <ligand>
        <name>FMN</name>
        <dbReference type="ChEBI" id="CHEBI:58210"/>
    </ligand>
</feature>
<feature type="binding site" evidence="1">
    <location>
        <position position="327"/>
    </location>
    <ligand>
        <name>FMN</name>
        <dbReference type="ChEBI" id="CHEBI:58210"/>
    </ligand>
</feature>
<evidence type="ECO:0000255" key="1">
    <source>
        <dbReference type="HAMAP-Rule" id="MF_00300"/>
    </source>
</evidence>
<evidence type="ECO:0000256" key="2">
    <source>
        <dbReference type="SAM" id="MobiDB-lite"/>
    </source>
</evidence>